<protein>
    <recommendedName>
        <fullName evidence="1">Cytochrome b559 subunit beta</fullName>
    </recommendedName>
    <alternativeName>
        <fullName evidence="1">PSII reaction center subunit VI</fullName>
    </alternativeName>
</protein>
<comment type="function">
    <text evidence="1">This b-type cytochrome is tightly associated with the reaction center of photosystem II (PSII). PSII is a light-driven water:plastoquinone oxidoreductase that uses light energy to abstract electrons from H(2)O, generating O(2) and a proton gradient subsequently used for ATP formation. It consists of a core antenna complex that captures photons, and an electron transfer chain that converts photonic excitation into a charge separation.</text>
</comment>
<comment type="cofactor">
    <cofactor evidence="1">
        <name>heme b</name>
        <dbReference type="ChEBI" id="CHEBI:60344"/>
    </cofactor>
    <text evidence="1">With its partner (PsbE) binds heme. PSII binds additional chlorophylls, carotenoids and specific lipids.</text>
</comment>
<comment type="subunit">
    <text evidence="1">Heterodimer of an alpha subunit and a beta subunit. PSII is composed of 1 copy each of membrane proteins PsbA, PsbB, PsbC, PsbD, PsbE, PsbF, PsbH, PsbI, PsbJ, PsbK, PsbL, PsbM, PsbT, PsbX, PsbY, PsbZ, Psb30/Ycf12, at least 3 peripheral proteins of the oxygen-evolving complex and a large number of cofactors. It forms dimeric complexes.</text>
</comment>
<comment type="subcellular location">
    <subcellularLocation>
        <location evidence="1">Plastid</location>
        <location evidence="1">Chloroplast thylakoid membrane</location>
        <topology evidence="1">Single-pass membrane protein</topology>
    </subcellularLocation>
</comment>
<comment type="similarity">
    <text evidence="1">Belongs to the PsbE/PsbF family.</text>
</comment>
<gene>
    <name evidence="1" type="primary">psbF</name>
    <name type="ordered locus">MoinCp037</name>
</gene>
<evidence type="ECO:0000255" key="1">
    <source>
        <dbReference type="HAMAP-Rule" id="MF_00643"/>
    </source>
</evidence>
<accession>Q09X01</accession>
<feature type="chain" id="PRO_0000275733" description="Cytochrome b559 subunit beta">
    <location>
        <begin position="1"/>
        <end position="39"/>
    </location>
</feature>
<feature type="transmembrane region" description="Helical" evidence="1">
    <location>
        <begin position="14"/>
        <end position="30"/>
    </location>
</feature>
<feature type="binding site" description="axial binding residue" evidence="1">
    <location>
        <position position="18"/>
    </location>
    <ligand>
        <name>heme</name>
        <dbReference type="ChEBI" id="CHEBI:30413"/>
        <note>ligand shared with alpha subunit</note>
    </ligand>
    <ligandPart>
        <name>Fe</name>
        <dbReference type="ChEBI" id="CHEBI:18248"/>
    </ligandPart>
</feature>
<name>PSBF_MORIN</name>
<geneLocation type="chloroplast"/>
<dbReference type="EMBL" id="DQ226511">
    <property type="protein sequence ID" value="ABB20972.1"/>
    <property type="molecule type" value="Genomic_DNA"/>
</dbReference>
<dbReference type="RefSeq" id="YP_762277.1">
    <property type="nucleotide sequence ID" value="NC_008359.1"/>
</dbReference>
<dbReference type="SMR" id="Q09X01"/>
<dbReference type="GeneID" id="4290680"/>
<dbReference type="GO" id="GO:0009535">
    <property type="term" value="C:chloroplast thylakoid membrane"/>
    <property type="evidence" value="ECO:0007669"/>
    <property type="project" value="UniProtKB-SubCell"/>
</dbReference>
<dbReference type="GO" id="GO:0009539">
    <property type="term" value="C:photosystem II reaction center"/>
    <property type="evidence" value="ECO:0007669"/>
    <property type="project" value="InterPro"/>
</dbReference>
<dbReference type="GO" id="GO:0009055">
    <property type="term" value="F:electron transfer activity"/>
    <property type="evidence" value="ECO:0007669"/>
    <property type="project" value="UniProtKB-UniRule"/>
</dbReference>
<dbReference type="GO" id="GO:0020037">
    <property type="term" value="F:heme binding"/>
    <property type="evidence" value="ECO:0007669"/>
    <property type="project" value="InterPro"/>
</dbReference>
<dbReference type="GO" id="GO:0005506">
    <property type="term" value="F:iron ion binding"/>
    <property type="evidence" value="ECO:0007669"/>
    <property type="project" value="UniProtKB-UniRule"/>
</dbReference>
<dbReference type="GO" id="GO:0009767">
    <property type="term" value="P:photosynthetic electron transport chain"/>
    <property type="evidence" value="ECO:0007669"/>
    <property type="project" value="InterPro"/>
</dbReference>
<dbReference type="HAMAP" id="MF_00643">
    <property type="entry name" value="PSII_PsbF"/>
    <property type="match status" value="1"/>
</dbReference>
<dbReference type="InterPro" id="IPR006241">
    <property type="entry name" value="PSII_cyt_b559_bsu"/>
</dbReference>
<dbReference type="InterPro" id="IPR006216">
    <property type="entry name" value="PSII_cyt_b559_CS"/>
</dbReference>
<dbReference type="InterPro" id="IPR013081">
    <property type="entry name" value="PSII_cyt_b559_N"/>
</dbReference>
<dbReference type="NCBIfam" id="TIGR01333">
    <property type="entry name" value="cyt_b559_beta"/>
    <property type="match status" value="1"/>
</dbReference>
<dbReference type="Pfam" id="PF00283">
    <property type="entry name" value="Cytochrom_B559"/>
    <property type="match status" value="1"/>
</dbReference>
<dbReference type="PIRSF" id="PIRSF000037">
    <property type="entry name" value="PsbF"/>
    <property type="match status" value="1"/>
</dbReference>
<dbReference type="SUPFAM" id="SSF161045">
    <property type="entry name" value="Cytochrome b559 subunits"/>
    <property type="match status" value="1"/>
</dbReference>
<dbReference type="PROSITE" id="PS00537">
    <property type="entry name" value="CYTOCHROME_B559"/>
    <property type="match status" value="1"/>
</dbReference>
<proteinExistence type="inferred from homology"/>
<sequence>MTIDRTYPIFTVRWLAVHGLAVPTVSFLGSISAMQFIQR</sequence>
<reference key="1">
    <citation type="submission" date="2005-09" db="EMBL/GenBank/DDBJ databases">
        <title>The chloroplast genome of mulberry: structural features and comparative analysis.</title>
        <authorList>
            <person name="Ravi V."/>
            <person name="Khurana J.P."/>
            <person name="Tyagi A.K."/>
            <person name="Khurana P."/>
        </authorList>
    </citation>
    <scope>NUCLEOTIDE SEQUENCE [LARGE SCALE GENOMIC DNA]</scope>
    <source>
        <strain>cv. K2</strain>
    </source>
</reference>
<keyword id="KW-0150">Chloroplast</keyword>
<keyword id="KW-0249">Electron transport</keyword>
<keyword id="KW-0349">Heme</keyword>
<keyword id="KW-0408">Iron</keyword>
<keyword id="KW-0472">Membrane</keyword>
<keyword id="KW-0479">Metal-binding</keyword>
<keyword id="KW-0602">Photosynthesis</keyword>
<keyword id="KW-0604">Photosystem II</keyword>
<keyword id="KW-0934">Plastid</keyword>
<keyword id="KW-0793">Thylakoid</keyword>
<keyword id="KW-0812">Transmembrane</keyword>
<keyword id="KW-1133">Transmembrane helix</keyword>
<keyword id="KW-0813">Transport</keyword>
<organism>
    <name type="scientific">Morus indica</name>
    <name type="common">Mulberry</name>
    <dbReference type="NCBI Taxonomy" id="248361"/>
    <lineage>
        <taxon>Eukaryota</taxon>
        <taxon>Viridiplantae</taxon>
        <taxon>Streptophyta</taxon>
        <taxon>Embryophyta</taxon>
        <taxon>Tracheophyta</taxon>
        <taxon>Spermatophyta</taxon>
        <taxon>Magnoliopsida</taxon>
        <taxon>eudicotyledons</taxon>
        <taxon>Gunneridae</taxon>
        <taxon>Pentapetalae</taxon>
        <taxon>rosids</taxon>
        <taxon>fabids</taxon>
        <taxon>Rosales</taxon>
        <taxon>Moraceae</taxon>
        <taxon>Moreae</taxon>
        <taxon>Morus</taxon>
    </lineage>
</organism>